<feature type="chain" id="PRO_1000164378" description="Succinylornithine transaminase">
    <location>
        <begin position="1"/>
        <end position="406"/>
    </location>
</feature>
<feature type="modified residue" description="N6-(pyridoxal phosphate)lysine" evidence="1">
    <location>
        <position position="252"/>
    </location>
</feature>
<name>ASTC_ECO7I</name>
<sequence length="406" mass="43574">MSQPITRENFDEWMIPVYAPAPFIPVRGEGSRLWDQQGKEYIDFAGGIAVNALGHAHPELREALNEQASKFWHTGNGYTNEPVLRLAKKLIDATFADRVFFCNSGAEANEAALKLARKFAHDRYGCHKSGIVAFKNAFHGRTLFTVSAGGQPAYSQDFAPLPPDIRHAAYNDINSASALIDDSTCAVIVEPIQGEGGVVPASNAFLHGLRELCDRHNALLIFDEVQTGVGRTGELYAYMHYGVTPDLLTTAKALGGGFPVGALLATEECASVMTVGTHGTTYGGNPLASAVAGKVLDLINTPEMLNGVKQRHDWFVERLNTVNHRCGLFSEIRGLGLLIGCVLNADYAGQAKQISQEAAKAGVMVLIAGGNVVRFAPALNVSEEEVTTGLDRFAAACEHFVSRGSS</sequence>
<protein>
    <recommendedName>
        <fullName evidence="1">Succinylornithine transaminase</fullName>
        <ecNumber evidence="1">2.6.1.81</ecNumber>
    </recommendedName>
    <alternativeName>
        <fullName evidence="1">Succinylornithine aminotransferase</fullName>
    </alternativeName>
</protein>
<comment type="function">
    <text evidence="1">Catalyzes the transamination of N(2)-succinylornithine and alpha-ketoglutarate into N(2)-succinylglutamate semialdehyde and glutamate. Can also act as an acetylornithine aminotransferase.</text>
</comment>
<comment type="catalytic activity">
    <reaction evidence="1">
        <text>N(2)-succinyl-L-ornithine + 2-oxoglutarate = N-succinyl-L-glutamate 5-semialdehyde + L-glutamate</text>
        <dbReference type="Rhea" id="RHEA:16953"/>
        <dbReference type="ChEBI" id="CHEBI:16810"/>
        <dbReference type="ChEBI" id="CHEBI:29985"/>
        <dbReference type="ChEBI" id="CHEBI:58514"/>
        <dbReference type="ChEBI" id="CHEBI:58520"/>
        <dbReference type="EC" id="2.6.1.81"/>
    </reaction>
</comment>
<comment type="cofactor">
    <cofactor evidence="1">
        <name>pyridoxal 5'-phosphate</name>
        <dbReference type="ChEBI" id="CHEBI:597326"/>
    </cofactor>
</comment>
<comment type="pathway">
    <text evidence="1">Amino-acid degradation; L-arginine degradation via AST pathway; L-glutamate and succinate from L-arginine: step 3/5.</text>
</comment>
<comment type="similarity">
    <text evidence="1">Belongs to the class-III pyridoxal-phosphate-dependent aminotransferase family. AstC subfamily.</text>
</comment>
<reference key="1">
    <citation type="journal article" date="2009" name="PLoS Genet.">
        <title>Organised genome dynamics in the Escherichia coli species results in highly diverse adaptive paths.</title>
        <authorList>
            <person name="Touchon M."/>
            <person name="Hoede C."/>
            <person name="Tenaillon O."/>
            <person name="Barbe V."/>
            <person name="Baeriswyl S."/>
            <person name="Bidet P."/>
            <person name="Bingen E."/>
            <person name="Bonacorsi S."/>
            <person name="Bouchier C."/>
            <person name="Bouvet O."/>
            <person name="Calteau A."/>
            <person name="Chiapello H."/>
            <person name="Clermont O."/>
            <person name="Cruveiller S."/>
            <person name="Danchin A."/>
            <person name="Diard M."/>
            <person name="Dossat C."/>
            <person name="Karoui M.E."/>
            <person name="Frapy E."/>
            <person name="Garry L."/>
            <person name="Ghigo J.M."/>
            <person name="Gilles A.M."/>
            <person name="Johnson J."/>
            <person name="Le Bouguenec C."/>
            <person name="Lescat M."/>
            <person name="Mangenot S."/>
            <person name="Martinez-Jehanne V."/>
            <person name="Matic I."/>
            <person name="Nassif X."/>
            <person name="Oztas S."/>
            <person name="Petit M.A."/>
            <person name="Pichon C."/>
            <person name="Rouy Z."/>
            <person name="Ruf C.S."/>
            <person name="Schneider D."/>
            <person name="Tourret J."/>
            <person name="Vacherie B."/>
            <person name="Vallenet D."/>
            <person name="Medigue C."/>
            <person name="Rocha E.P.C."/>
            <person name="Denamur E."/>
        </authorList>
    </citation>
    <scope>NUCLEOTIDE SEQUENCE [LARGE SCALE GENOMIC DNA]</scope>
    <source>
        <strain>IAI39 / ExPEC</strain>
    </source>
</reference>
<evidence type="ECO:0000255" key="1">
    <source>
        <dbReference type="HAMAP-Rule" id="MF_01173"/>
    </source>
</evidence>
<gene>
    <name evidence="1" type="primary">astC</name>
    <name evidence="1" type="synonym">argM</name>
    <name type="ordered locus">ECIAI39_1306</name>
</gene>
<accession>B7NT29</accession>
<dbReference type="EC" id="2.6.1.81" evidence="1"/>
<dbReference type="EMBL" id="CU928164">
    <property type="protein sequence ID" value="CAR17440.1"/>
    <property type="molecule type" value="Genomic_DNA"/>
</dbReference>
<dbReference type="RefSeq" id="WP_000081974.1">
    <property type="nucleotide sequence ID" value="NC_011750.1"/>
</dbReference>
<dbReference type="RefSeq" id="YP_002407314.1">
    <property type="nucleotide sequence ID" value="NC_011750.1"/>
</dbReference>
<dbReference type="SMR" id="B7NT29"/>
<dbReference type="STRING" id="585057.ECIAI39_1306"/>
<dbReference type="KEGG" id="ect:ECIAI39_1306"/>
<dbReference type="PATRIC" id="fig|585057.6.peg.1368"/>
<dbReference type="HOGENOM" id="CLU_016922_10_1_6"/>
<dbReference type="UniPathway" id="UPA00185">
    <property type="reaction ID" value="UER00281"/>
</dbReference>
<dbReference type="Proteomes" id="UP000000749">
    <property type="component" value="Chromosome"/>
</dbReference>
<dbReference type="GO" id="GO:0042802">
    <property type="term" value="F:identical protein binding"/>
    <property type="evidence" value="ECO:0007669"/>
    <property type="project" value="TreeGrafter"/>
</dbReference>
<dbReference type="GO" id="GO:0030170">
    <property type="term" value="F:pyridoxal phosphate binding"/>
    <property type="evidence" value="ECO:0007669"/>
    <property type="project" value="UniProtKB-UniRule"/>
</dbReference>
<dbReference type="GO" id="GO:0043825">
    <property type="term" value="F:succinylornithine transaminase activity"/>
    <property type="evidence" value="ECO:0007669"/>
    <property type="project" value="UniProtKB-EC"/>
</dbReference>
<dbReference type="GO" id="GO:1901607">
    <property type="term" value="P:alpha-amino acid biosynthetic process"/>
    <property type="evidence" value="ECO:0007669"/>
    <property type="project" value="UniProtKB-ARBA"/>
</dbReference>
<dbReference type="GO" id="GO:0019544">
    <property type="term" value="P:arginine catabolic process to glutamate"/>
    <property type="evidence" value="ECO:0007669"/>
    <property type="project" value="UniProtKB-UniRule"/>
</dbReference>
<dbReference type="GO" id="GO:0019545">
    <property type="term" value="P:arginine catabolic process to succinate"/>
    <property type="evidence" value="ECO:0007669"/>
    <property type="project" value="UniProtKB-UniRule"/>
</dbReference>
<dbReference type="GO" id="GO:0006593">
    <property type="term" value="P:ornithine catabolic process"/>
    <property type="evidence" value="ECO:0007669"/>
    <property type="project" value="InterPro"/>
</dbReference>
<dbReference type="CDD" id="cd00610">
    <property type="entry name" value="OAT_like"/>
    <property type="match status" value="1"/>
</dbReference>
<dbReference type="FunFam" id="3.40.640.10:FF:000004">
    <property type="entry name" value="Acetylornithine aminotransferase"/>
    <property type="match status" value="1"/>
</dbReference>
<dbReference type="FunFam" id="3.90.1150.10:FF:000009">
    <property type="entry name" value="Succinylornithine transaminase"/>
    <property type="match status" value="1"/>
</dbReference>
<dbReference type="Gene3D" id="3.90.1150.10">
    <property type="entry name" value="Aspartate Aminotransferase, domain 1"/>
    <property type="match status" value="1"/>
</dbReference>
<dbReference type="Gene3D" id="3.40.640.10">
    <property type="entry name" value="Type I PLP-dependent aspartate aminotransferase-like (Major domain)"/>
    <property type="match status" value="1"/>
</dbReference>
<dbReference type="HAMAP" id="MF_01107">
    <property type="entry name" value="ArgD_aminotrans_3"/>
    <property type="match status" value="1"/>
</dbReference>
<dbReference type="HAMAP" id="MF_01173">
    <property type="entry name" value="AstC_aminotrans_3"/>
    <property type="match status" value="1"/>
</dbReference>
<dbReference type="InterPro" id="IPR017652">
    <property type="entry name" value="Ac/SucOrn_transaminase_bac"/>
</dbReference>
<dbReference type="InterPro" id="IPR004636">
    <property type="entry name" value="AcOrn/SuccOrn_fam"/>
</dbReference>
<dbReference type="InterPro" id="IPR005814">
    <property type="entry name" value="Aminotrans_3"/>
</dbReference>
<dbReference type="InterPro" id="IPR049704">
    <property type="entry name" value="Aminotrans_3_PPA_site"/>
</dbReference>
<dbReference type="InterPro" id="IPR050103">
    <property type="entry name" value="Class-III_PLP-dep_AT"/>
</dbReference>
<dbReference type="InterPro" id="IPR015424">
    <property type="entry name" value="PyrdxlP-dep_Trfase"/>
</dbReference>
<dbReference type="InterPro" id="IPR015421">
    <property type="entry name" value="PyrdxlP-dep_Trfase_major"/>
</dbReference>
<dbReference type="InterPro" id="IPR015422">
    <property type="entry name" value="PyrdxlP-dep_Trfase_small"/>
</dbReference>
<dbReference type="InterPro" id="IPR026330">
    <property type="entry name" value="SOAT"/>
</dbReference>
<dbReference type="NCBIfam" id="TIGR03246">
    <property type="entry name" value="arg_catab_astC"/>
    <property type="match status" value="1"/>
</dbReference>
<dbReference type="NCBIfam" id="TIGR00707">
    <property type="entry name" value="argD"/>
    <property type="match status" value="1"/>
</dbReference>
<dbReference type="NCBIfam" id="NF002325">
    <property type="entry name" value="PRK01278.1"/>
    <property type="match status" value="1"/>
</dbReference>
<dbReference type="NCBIfam" id="NF003468">
    <property type="entry name" value="PRK05093.1"/>
    <property type="match status" value="1"/>
</dbReference>
<dbReference type="NCBIfam" id="NF009047">
    <property type="entry name" value="PRK12381.1"/>
    <property type="match status" value="1"/>
</dbReference>
<dbReference type="PANTHER" id="PTHR11986">
    <property type="entry name" value="AMINOTRANSFERASE CLASS III"/>
    <property type="match status" value="1"/>
</dbReference>
<dbReference type="PANTHER" id="PTHR11986:SF113">
    <property type="entry name" value="SUCCINYLORNITHINE TRANSAMINASE"/>
    <property type="match status" value="1"/>
</dbReference>
<dbReference type="Pfam" id="PF00202">
    <property type="entry name" value="Aminotran_3"/>
    <property type="match status" value="1"/>
</dbReference>
<dbReference type="PIRSF" id="PIRSF000521">
    <property type="entry name" value="Transaminase_4ab_Lys_Orn"/>
    <property type="match status" value="1"/>
</dbReference>
<dbReference type="SUPFAM" id="SSF53383">
    <property type="entry name" value="PLP-dependent transferases"/>
    <property type="match status" value="1"/>
</dbReference>
<dbReference type="PROSITE" id="PS00600">
    <property type="entry name" value="AA_TRANSFER_CLASS_3"/>
    <property type="match status" value="1"/>
</dbReference>
<keyword id="KW-0032">Aminotransferase</keyword>
<keyword id="KW-0056">Arginine metabolism</keyword>
<keyword id="KW-0663">Pyridoxal phosphate</keyword>
<keyword id="KW-0808">Transferase</keyword>
<proteinExistence type="inferred from homology"/>
<organism>
    <name type="scientific">Escherichia coli O7:K1 (strain IAI39 / ExPEC)</name>
    <dbReference type="NCBI Taxonomy" id="585057"/>
    <lineage>
        <taxon>Bacteria</taxon>
        <taxon>Pseudomonadati</taxon>
        <taxon>Pseudomonadota</taxon>
        <taxon>Gammaproteobacteria</taxon>
        <taxon>Enterobacterales</taxon>
        <taxon>Enterobacteriaceae</taxon>
        <taxon>Escherichia</taxon>
    </lineage>
</organism>